<dbReference type="EMBL" id="AL954747">
    <property type="protein sequence ID" value="CAD84220.1"/>
    <property type="molecule type" value="Genomic_DNA"/>
</dbReference>
<dbReference type="RefSeq" id="WP_011110944.1">
    <property type="nucleotide sequence ID" value="NC_004757.1"/>
</dbReference>
<dbReference type="SMR" id="Q82XG5"/>
<dbReference type="STRING" id="228410.NE0309"/>
<dbReference type="GeneID" id="87103516"/>
<dbReference type="KEGG" id="neu:NE0309"/>
<dbReference type="eggNOG" id="COG1706">
    <property type="taxonomic scope" value="Bacteria"/>
</dbReference>
<dbReference type="HOGENOM" id="CLU_045235_1_0_4"/>
<dbReference type="OrthoDB" id="9786431at2"/>
<dbReference type="PhylomeDB" id="Q82XG5"/>
<dbReference type="Proteomes" id="UP000001416">
    <property type="component" value="Chromosome"/>
</dbReference>
<dbReference type="GO" id="GO:0009428">
    <property type="term" value="C:bacterial-type flagellum basal body, distal rod, P ring"/>
    <property type="evidence" value="ECO:0007669"/>
    <property type="project" value="InterPro"/>
</dbReference>
<dbReference type="GO" id="GO:0030288">
    <property type="term" value="C:outer membrane-bounded periplasmic space"/>
    <property type="evidence" value="ECO:0007669"/>
    <property type="project" value="InterPro"/>
</dbReference>
<dbReference type="GO" id="GO:0005198">
    <property type="term" value="F:structural molecule activity"/>
    <property type="evidence" value="ECO:0007669"/>
    <property type="project" value="InterPro"/>
</dbReference>
<dbReference type="GO" id="GO:0071973">
    <property type="term" value="P:bacterial-type flagellum-dependent cell motility"/>
    <property type="evidence" value="ECO:0007669"/>
    <property type="project" value="InterPro"/>
</dbReference>
<dbReference type="HAMAP" id="MF_00416">
    <property type="entry name" value="FlgI"/>
    <property type="match status" value="1"/>
</dbReference>
<dbReference type="InterPro" id="IPR001782">
    <property type="entry name" value="Flag_FlgI"/>
</dbReference>
<dbReference type="NCBIfam" id="NF003676">
    <property type="entry name" value="PRK05303.1"/>
    <property type="match status" value="1"/>
</dbReference>
<dbReference type="PANTHER" id="PTHR30381">
    <property type="entry name" value="FLAGELLAR P-RING PERIPLASMIC PROTEIN FLGI"/>
    <property type="match status" value="1"/>
</dbReference>
<dbReference type="PANTHER" id="PTHR30381:SF0">
    <property type="entry name" value="FLAGELLAR P-RING PROTEIN"/>
    <property type="match status" value="1"/>
</dbReference>
<dbReference type="Pfam" id="PF02119">
    <property type="entry name" value="FlgI"/>
    <property type="match status" value="1"/>
</dbReference>
<dbReference type="PRINTS" id="PR01010">
    <property type="entry name" value="FLGPRINGFLGI"/>
</dbReference>
<keyword id="KW-0975">Bacterial flagellum</keyword>
<keyword id="KW-0574">Periplasm</keyword>
<keyword id="KW-1185">Reference proteome</keyword>
<keyword id="KW-0732">Signal</keyword>
<sequence>MTLSKWILSFGLSVCLIVSHPVSAERIKDLANIQGVRANQLIGYGLVVGLDGTGDQTQQTPFTVQSILSMLGQLGVNLPPGTNLQLRNVASVMVTATLPAFAKPGQQIDVTVSSMGNAKSLRGGTLLMTPLKGIDNQVYAVAQGSLVIGGAGASSAGSSVQINHLGAGRISAGAIVERAVPTVLGQGEYINLELRDTDFTTARRIVDTINSRFSYGTATALDGRVIQLRAPLNNNQRVTFISQIEDLDVIPAQGIAKVIINARTGSVVMNQMVTLESSAVAHGNLSVIINTQPIVSQPGPFAQRGETVVVPQSQIEVRSEEGNLMLLPGSASLADVVKALNAIGATPQDLLAILQALKASGSLRAELEII</sequence>
<gene>
    <name evidence="1" type="primary">flgI</name>
    <name type="ordered locus">NE0309</name>
</gene>
<name>FLGI_NITEU</name>
<organism>
    <name type="scientific">Nitrosomonas europaea (strain ATCC 19718 / CIP 103999 / KCTC 2705 / NBRC 14298)</name>
    <dbReference type="NCBI Taxonomy" id="228410"/>
    <lineage>
        <taxon>Bacteria</taxon>
        <taxon>Pseudomonadati</taxon>
        <taxon>Pseudomonadota</taxon>
        <taxon>Betaproteobacteria</taxon>
        <taxon>Nitrosomonadales</taxon>
        <taxon>Nitrosomonadaceae</taxon>
        <taxon>Nitrosomonas</taxon>
    </lineage>
</organism>
<evidence type="ECO:0000255" key="1">
    <source>
        <dbReference type="HAMAP-Rule" id="MF_00416"/>
    </source>
</evidence>
<protein>
    <recommendedName>
        <fullName evidence="1">Flagellar P-ring protein</fullName>
    </recommendedName>
    <alternativeName>
        <fullName evidence="1">Basal body P-ring protein</fullName>
    </alternativeName>
</protein>
<comment type="function">
    <text evidence="1">Assembles around the rod to form the L-ring and probably protects the motor/basal body from shearing forces during rotation.</text>
</comment>
<comment type="subunit">
    <text evidence="1">The basal body constitutes a major portion of the flagellar organelle and consists of four rings (L,P,S, and M) mounted on a central rod.</text>
</comment>
<comment type="subcellular location">
    <subcellularLocation>
        <location evidence="1">Periplasm</location>
    </subcellularLocation>
    <subcellularLocation>
        <location evidence="1">Bacterial flagellum basal body</location>
    </subcellularLocation>
</comment>
<comment type="similarity">
    <text evidence="1">Belongs to the FlgI family.</text>
</comment>
<feature type="signal peptide" evidence="1">
    <location>
        <begin position="1"/>
        <end position="24"/>
    </location>
</feature>
<feature type="chain" id="PRO_0000041800" description="Flagellar P-ring protein">
    <location>
        <begin position="25"/>
        <end position="370"/>
    </location>
</feature>
<proteinExistence type="inferred from homology"/>
<reference key="1">
    <citation type="journal article" date="2003" name="J. Bacteriol.">
        <title>Complete genome sequence of the ammonia-oxidizing bacterium and obligate chemolithoautotroph Nitrosomonas europaea.</title>
        <authorList>
            <person name="Chain P."/>
            <person name="Lamerdin J.E."/>
            <person name="Larimer F.W."/>
            <person name="Regala W."/>
            <person name="Lao V."/>
            <person name="Land M.L."/>
            <person name="Hauser L."/>
            <person name="Hooper A.B."/>
            <person name="Klotz M.G."/>
            <person name="Norton J."/>
            <person name="Sayavedra-Soto L.A."/>
            <person name="Arciero D.M."/>
            <person name="Hommes N.G."/>
            <person name="Whittaker M.M."/>
            <person name="Arp D.J."/>
        </authorList>
    </citation>
    <scope>NUCLEOTIDE SEQUENCE [LARGE SCALE GENOMIC DNA]</scope>
    <source>
        <strain>ATCC 19718 / CIP 103999 / KCTC 2705 / NBRC 14298</strain>
    </source>
</reference>
<accession>Q82XG5</accession>